<reference key="1">
    <citation type="journal article" date="2004" name="Nat. Biotechnol.">
        <title>Complete sequence and comparative genome analysis of the dairy bacterium Streptococcus thermophilus.</title>
        <authorList>
            <person name="Bolotin A."/>
            <person name="Quinquis B."/>
            <person name="Renault P."/>
            <person name="Sorokin A."/>
            <person name="Ehrlich S.D."/>
            <person name="Kulakauskas S."/>
            <person name="Lapidus A."/>
            <person name="Goltsman E."/>
            <person name="Mazur M."/>
            <person name="Pusch G.D."/>
            <person name="Fonstein M."/>
            <person name="Overbeek R."/>
            <person name="Kyprides N."/>
            <person name="Purnelle B."/>
            <person name="Prozzi D."/>
            <person name="Ngui K."/>
            <person name="Masuy D."/>
            <person name="Hancy F."/>
            <person name="Burteau S."/>
            <person name="Boutry M."/>
            <person name="Delcour J."/>
            <person name="Goffeau A."/>
            <person name="Hols P."/>
        </authorList>
    </citation>
    <scope>NUCLEOTIDE SEQUENCE [LARGE SCALE GENOMIC DNA]</scope>
    <source>
        <strain>ATCC BAA-250 / LMG 18311</strain>
    </source>
</reference>
<sequence length="454" mass="52195">MTEKEHFFWNKLLELAKEELTQATFDYYVLDTKLIKIQDNVATILLEEVKKLFWEKNMQSFILMTGFEVYNSEIKVEYVFDEALVSETKPTLANNDFSNKREQQTPDLPTLNSDLNSKYTFDNFIQGDENRWSVAASLAVADSPGATYNPLFIYGGPGLGKTHLLNAIGNKVLHDNPQARIKYITAENFINEFVLHIRLDKMDELKLKYRHLDVLLIDDIQSLAKKSTQATQEEFFNTFNVLHDNNKQIVLTSDRNPDQLNEMEERLVTRFKWGLTVNITPPDFETRVAILTNKIMDYDYHFPPETIEYLAGQFDSNVRDLEGALKDISLVANVRQLDTITVEVAAEAIRARKIDGPKLTLIPIEDIQSEVGKFYNVTVKEIKATKRTQNIVLARQVAMYLAREMTDNSLPKIGKEFGGRDHSTVLHAYNKIKNMLAQDDSLRIEIDTIKNKIK</sequence>
<organism>
    <name type="scientific">Streptococcus thermophilus (strain ATCC BAA-250 / LMG 18311)</name>
    <dbReference type="NCBI Taxonomy" id="264199"/>
    <lineage>
        <taxon>Bacteria</taxon>
        <taxon>Bacillati</taxon>
        <taxon>Bacillota</taxon>
        <taxon>Bacilli</taxon>
        <taxon>Lactobacillales</taxon>
        <taxon>Streptococcaceae</taxon>
        <taxon>Streptococcus</taxon>
    </lineage>
</organism>
<comment type="function">
    <text evidence="1">Plays an essential role in the initiation and regulation of chromosomal replication. ATP-DnaA binds to the origin of replication (oriC) to initiate formation of the DNA replication initiation complex once per cell cycle. Binds the DnaA box (a 9 base pair repeat at the origin) and separates the double-stranded (ds)DNA. Forms a right-handed helical filament on oriC DNA; dsDNA binds to the exterior of the filament while single-stranded (ss)DNA is stabiized in the filament's interior. The ATP-DnaA-oriC complex binds and stabilizes one strand of the AT-rich DNA unwinding element (DUE), permitting loading of DNA polymerase. After initiation quickly degrades to an ADP-DnaA complex that is not apt for DNA replication. Binds acidic phospholipids.</text>
</comment>
<comment type="subunit">
    <text evidence="1">Oligomerizes as a right-handed, spiral filament on DNA at oriC.</text>
</comment>
<comment type="subcellular location">
    <subcellularLocation>
        <location evidence="1">Cytoplasm</location>
    </subcellularLocation>
</comment>
<comment type="domain">
    <text evidence="1">Domain I is involved in oligomerization and binding regulators, domain II is flexibile and of varying length in different bacteria, domain III forms the AAA+ region, while domain IV binds dsDNA.</text>
</comment>
<comment type="similarity">
    <text evidence="1">Belongs to the DnaA family.</text>
</comment>
<evidence type="ECO:0000255" key="1">
    <source>
        <dbReference type="HAMAP-Rule" id="MF_00377"/>
    </source>
</evidence>
<name>DNAA_STRT2</name>
<dbReference type="EMBL" id="CP000023">
    <property type="protein sequence ID" value="AAV59731.1"/>
    <property type="molecule type" value="Genomic_DNA"/>
</dbReference>
<dbReference type="RefSeq" id="WP_002948584.1">
    <property type="nucleotide sequence ID" value="NC_006448.1"/>
</dbReference>
<dbReference type="SMR" id="Q5M6L8"/>
<dbReference type="STRING" id="264199.stu0001"/>
<dbReference type="GeneID" id="66897904"/>
<dbReference type="KEGG" id="stl:stu0001"/>
<dbReference type="eggNOG" id="COG0593">
    <property type="taxonomic scope" value="Bacteria"/>
</dbReference>
<dbReference type="HOGENOM" id="CLU_026910_3_2_9"/>
<dbReference type="Proteomes" id="UP000001170">
    <property type="component" value="Chromosome"/>
</dbReference>
<dbReference type="GO" id="GO:0005737">
    <property type="term" value="C:cytoplasm"/>
    <property type="evidence" value="ECO:0007669"/>
    <property type="project" value="UniProtKB-SubCell"/>
</dbReference>
<dbReference type="GO" id="GO:0005886">
    <property type="term" value="C:plasma membrane"/>
    <property type="evidence" value="ECO:0007669"/>
    <property type="project" value="TreeGrafter"/>
</dbReference>
<dbReference type="GO" id="GO:0005524">
    <property type="term" value="F:ATP binding"/>
    <property type="evidence" value="ECO:0007669"/>
    <property type="project" value="UniProtKB-UniRule"/>
</dbReference>
<dbReference type="GO" id="GO:0016887">
    <property type="term" value="F:ATP hydrolysis activity"/>
    <property type="evidence" value="ECO:0007669"/>
    <property type="project" value="InterPro"/>
</dbReference>
<dbReference type="GO" id="GO:0003688">
    <property type="term" value="F:DNA replication origin binding"/>
    <property type="evidence" value="ECO:0007669"/>
    <property type="project" value="UniProtKB-UniRule"/>
</dbReference>
<dbReference type="GO" id="GO:0008289">
    <property type="term" value="F:lipid binding"/>
    <property type="evidence" value="ECO:0007669"/>
    <property type="project" value="UniProtKB-KW"/>
</dbReference>
<dbReference type="GO" id="GO:0006270">
    <property type="term" value="P:DNA replication initiation"/>
    <property type="evidence" value="ECO:0007669"/>
    <property type="project" value="UniProtKB-UniRule"/>
</dbReference>
<dbReference type="GO" id="GO:0006275">
    <property type="term" value="P:regulation of DNA replication"/>
    <property type="evidence" value="ECO:0007669"/>
    <property type="project" value="UniProtKB-UniRule"/>
</dbReference>
<dbReference type="CDD" id="cd00009">
    <property type="entry name" value="AAA"/>
    <property type="match status" value="1"/>
</dbReference>
<dbReference type="CDD" id="cd06571">
    <property type="entry name" value="Bac_DnaA_C"/>
    <property type="match status" value="1"/>
</dbReference>
<dbReference type="FunFam" id="1.10.1750.10:FF:000002">
    <property type="entry name" value="Chromosomal replication initiator protein DnaA"/>
    <property type="match status" value="1"/>
</dbReference>
<dbReference type="FunFam" id="3.40.50.300:FF:000668">
    <property type="entry name" value="Chromosomal replication initiator protein DnaA"/>
    <property type="match status" value="1"/>
</dbReference>
<dbReference type="Gene3D" id="1.10.1750.10">
    <property type="match status" value="1"/>
</dbReference>
<dbReference type="Gene3D" id="1.10.8.60">
    <property type="match status" value="1"/>
</dbReference>
<dbReference type="Gene3D" id="3.30.300.180">
    <property type="match status" value="1"/>
</dbReference>
<dbReference type="Gene3D" id="3.40.50.300">
    <property type="entry name" value="P-loop containing nucleotide triphosphate hydrolases"/>
    <property type="match status" value="1"/>
</dbReference>
<dbReference type="HAMAP" id="MF_00377">
    <property type="entry name" value="DnaA_bact"/>
    <property type="match status" value="1"/>
</dbReference>
<dbReference type="InterPro" id="IPR003593">
    <property type="entry name" value="AAA+_ATPase"/>
</dbReference>
<dbReference type="InterPro" id="IPR001957">
    <property type="entry name" value="Chromosome_initiator_DnaA"/>
</dbReference>
<dbReference type="InterPro" id="IPR020591">
    <property type="entry name" value="Chromosome_initiator_DnaA-like"/>
</dbReference>
<dbReference type="InterPro" id="IPR018312">
    <property type="entry name" value="Chromosome_initiator_DnaA_CS"/>
</dbReference>
<dbReference type="InterPro" id="IPR013159">
    <property type="entry name" value="DnaA_C"/>
</dbReference>
<dbReference type="InterPro" id="IPR013317">
    <property type="entry name" value="DnaA_dom"/>
</dbReference>
<dbReference type="InterPro" id="IPR038454">
    <property type="entry name" value="DnaA_N_sf"/>
</dbReference>
<dbReference type="InterPro" id="IPR027417">
    <property type="entry name" value="P-loop_NTPase"/>
</dbReference>
<dbReference type="InterPro" id="IPR010921">
    <property type="entry name" value="Trp_repressor/repl_initiator"/>
</dbReference>
<dbReference type="NCBIfam" id="TIGR00362">
    <property type="entry name" value="DnaA"/>
    <property type="match status" value="1"/>
</dbReference>
<dbReference type="PANTHER" id="PTHR30050">
    <property type="entry name" value="CHROMOSOMAL REPLICATION INITIATOR PROTEIN DNAA"/>
    <property type="match status" value="1"/>
</dbReference>
<dbReference type="PANTHER" id="PTHR30050:SF2">
    <property type="entry name" value="CHROMOSOMAL REPLICATION INITIATOR PROTEIN DNAA"/>
    <property type="match status" value="1"/>
</dbReference>
<dbReference type="Pfam" id="PF00308">
    <property type="entry name" value="Bac_DnaA"/>
    <property type="match status" value="1"/>
</dbReference>
<dbReference type="Pfam" id="PF08299">
    <property type="entry name" value="Bac_DnaA_C"/>
    <property type="match status" value="1"/>
</dbReference>
<dbReference type="PRINTS" id="PR00051">
    <property type="entry name" value="DNAA"/>
</dbReference>
<dbReference type="SMART" id="SM00382">
    <property type="entry name" value="AAA"/>
    <property type="match status" value="1"/>
</dbReference>
<dbReference type="SMART" id="SM00760">
    <property type="entry name" value="Bac_DnaA_C"/>
    <property type="match status" value="1"/>
</dbReference>
<dbReference type="SUPFAM" id="SSF52540">
    <property type="entry name" value="P-loop containing nucleoside triphosphate hydrolases"/>
    <property type="match status" value="1"/>
</dbReference>
<dbReference type="SUPFAM" id="SSF48295">
    <property type="entry name" value="TrpR-like"/>
    <property type="match status" value="1"/>
</dbReference>
<dbReference type="PROSITE" id="PS01008">
    <property type="entry name" value="DNAA"/>
    <property type="match status" value="1"/>
</dbReference>
<keyword id="KW-0067">ATP-binding</keyword>
<keyword id="KW-0963">Cytoplasm</keyword>
<keyword id="KW-0235">DNA replication</keyword>
<keyword id="KW-0238">DNA-binding</keyword>
<keyword id="KW-0446">Lipid-binding</keyword>
<keyword id="KW-0547">Nucleotide-binding</keyword>
<keyword id="KW-1185">Reference proteome</keyword>
<accession>Q5M6L8</accession>
<gene>
    <name evidence="1" type="primary">dnaA</name>
    <name type="ordered locus">stu0001</name>
</gene>
<protein>
    <recommendedName>
        <fullName evidence="1">Chromosomal replication initiator protein DnaA</fullName>
    </recommendedName>
</protein>
<proteinExistence type="inferred from homology"/>
<feature type="chain" id="PRO_0000114281" description="Chromosomal replication initiator protein DnaA">
    <location>
        <begin position="1"/>
        <end position="454"/>
    </location>
</feature>
<feature type="region of interest" description="Domain I, interacts with DnaA modulators" evidence="1">
    <location>
        <begin position="1"/>
        <end position="83"/>
    </location>
</feature>
<feature type="region of interest" description="Domain II" evidence="1">
    <location>
        <begin position="83"/>
        <end position="113"/>
    </location>
</feature>
<feature type="region of interest" description="Domain III, AAA+ region" evidence="1">
    <location>
        <begin position="114"/>
        <end position="332"/>
    </location>
</feature>
<feature type="region of interest" description="Domain IV, binds dsDNA" evidence="1">
    <location>
        <begin position="333"/>
        <end position="454"/>
    </location>
</feature>
<feature type="binding site" evidence="1">
    <location>
        <position position="158"/>
    </location>
    <ligand>
        <name>ATP</name>
        <dbReference type="ChEBI" id="CHEBI:30616"/>
    </ligand>
</feature>
<feature type="binding site" evidence="1">
    <location>
        <position position="160"/>
    </location>
    <ligand>
        <name>ATP</name>
        <dbReference type="ChEBI" id="CHEBI:30616"/>
    </ligand>
</feature>
<feature type="binding site" evidence="1">
    <location>
        <position position="161"/>
    </location>
    <ligand>
        <name>ATP</name>
        <dbReference type="ChEBI" id="CHEBI:30616"/>
    </ligand>
</feature>
<feature type="binding site" evidence="1">
    <location>
        <position position="162"/>
    </location>
    <ligand>
        <name>ATP</name>
        <dbReference type="ChEBI" id="CHEBI:30616"/>
    </ligand>
</feature>